<proteinExistence type="evidence at protein level"/>
<feature type="chain" id="PRO_0000435519" description="L-erythrulose-1-phosphate isomerase">
    <location>
        <begin position="1"/>
        <end position="263"/>
    </location>
</feature>
<feature type="active site" description="Electrophile" evidence="1">
    <location>
        <position position="106"/>
    </location>
</feature>
<feature type="active site" description="Proton acceptor" evidence="1">
    <location>
        <position position="178"/>
    </location>
</feature>
<dbReference type="EC" id="5.3.1.33" evidence="2 6"/>
<dbReference type="EMBL" id="CP000480">
    <property type="protein sequence ID" value="ABK75255.1"/>
    <property type="molecule type" value="Genomic_DNA"/>
</dbReference>
<dbReference type="EMBL" id="CP001663">
    <property type="protein sequence ID" value="AFP43029.1"/>
    <property type="status" value="ALT_INIT"/>
    <property type="molecule type" value="Genomic_DNA"/>
</dbReference>
<dbReference type="RefSeq" id="WP_011731538.1">
    <property type="nucleotide sequence ID" value="NZ_SIJM01000001.1"/>
</dbReference>
<dbReference type="RefSeq" id="YP_890994.1">
    <property type="nucleotide sequence ID" value="NC_008596.1"/>
</dbReference>
<dbReference type="SMR" id="A0R756"/>
<dbReference type="STRING" id="246196.MSMEG_6785"/>
<dbReference type="PaxDb" id="246196-MSMEI_6603"/>
<dbReference type="KEGG" id="msb:LJ00_33530"/>
<dbReference type="KEGG" id="msg:MSMEI_6603"/>
<dbReference type="KEGG" id="msm:MSMEG_6785"/>
<dbReference type="PATRIC" id="fig|246196.19.peg.6606"/>
<dbReference type="eggNOG" id="COG0149">
    <property type="taxonomic scope" value="Bacteria"/>
</dbReference>
<dbReference type="OrthoDB" id="9809429at2"/>
<dbReference type="BioCyc" id="MetaCyc:MONOMER-19894"/>
<dbReference type="UniPathway" id="UPA01067"/>
<dbReference type="Proteomes" id="UP000000757">
    <property type="component" value="Chromosome"/>
</dbReference>
<dbReference type="Proteomes" id="UP000006158">
    <property type="component" value="Chromosome"/>
</dbReference>
<dbReference type="GO" id="GO:0005829">
    <property type="term" value="C:cytosol"/>
    <property type="evidence" value="ECO:0007669"/>
    <property type="project" value="TreeGrafter"/>
</dbReference>
<dbReference type="GO" id="GO:0016857">
    <property type="term" value="F:racemase and epimerase activity, acting on carbohydrates and derivatives"/>
    <property type="evidence" value="ECO:0000314"/>
    <property type="project" value="UniProtKB"/>
</dbReference>
<dbReference type="GO" id="GO:0004807">
    <property type="term" value="F:triose-phosphate isomerase activity"/>
    <property type="evidence" value="ECO:0007669"/>
    <property type="project" value="InterPro"/>
</dbReference>
<dbReference type="GO" id="GO:0016052">
    <property type="term" value="P:carbohydrate catabolic process"/>
    <property type="evidence" value="ECO:0000315"/>
    <property type="project" value="UniProtKB"/>
</dbReference>
<dbReference type="GO" id="GO:0009758">
    <property type="term" value="P:carbohydrate utilization"/>
    <property type="evidence" value="ECO:0000315"/>
    <property type="project" value="UniProtKB"/>
</dbReference>
<dbReference type="GO" id="GO:0006094">
    <property type="term" value="P:gluconeogenesis"/>
    <property type="evidence" value="ECO:0007669"/>
    <property type="project" value="TreeGrafter"/>
</dbReference>
<dbReference type="GO" id="GO:0046166">
    <property type="term" value="P:glyceraldehyde-3-phosphate biosynthetic process"/>
    <property type="evidence" value="ECO:0007669"/>
    <property type="project" value="TreeGrafter"/>
</dbReference>
<dbReference type="GO" id="GO:0019563">
    <property type="term" value="P:glycerol catabolic process"/>
    <property type="evidence" value="ECO:0007669"/>
    <property type="project" value="TreeGrafter"/>
</dbReference>
<dbReference type="GO" id="GO:0006096">
    <property type="term" value="P:glycolytic process"/>
    <property type="evidence" value="ECO:0007669"/>
    <property type="project" value="TreeGrafter"/>
</dbReference>
<dbReference type="CDD" id="cd00311">
    <property type="entry name" value="TIM"/>
    <property type="match status" value="1"/>
</dbReference>
<dbReference type="Gene3D" id="3.20.20.70">
    <property type="entry name" value="Aldolase class I"/>
    <property type="match status" value="1"/>
</dbReference>
<dbReference type="InterPro" id="IPR013785">
    <property type="entry name" value="Aldolase_TIM"/>
</dbReference>
<dbReference type="InterPro" id="IPR035990">
    <property type="entry name" value="TIM_sf"/>
</dbReference>
<dbReference type="InterPro" id="IPR000652">
    <property type="entry name" value="Triosephosphate_isomerase"/>
</dbReference>
<dbReference type="InterPro" id="IPR020861">
    <property type="entry name" value="Triosephosphate_isomerase_AS"/>
</dbReference>
<dbReference type="NCBIfam" id="NF000722">
    <property type="entry name" value="PRK00042.2-1"/>
    <property type="match status" value="1"/>
</dbReference>
<dbReference type="PANTHER" id="PTHR21139">
    <property type="entry name" value="TRIOSEPHOSPHATE ISOMERASE"/>
    <property type="match status" value="1"/>
</dbReference>
<dbReference type="PANTHER" id="PTHR21139:SF42">
    <property type="entry name" value="TRIOSEPHOSPHATE ISOMERASE"/>
    <property type="match status" value="1"/>
</dbReference>
<dbReference type="Pfam" id="PF00121">
    <property type="entry name" value="TIM"/>
    <property type="match status" value="1"/>
</dbReference>
<dbReference type="SUPFAM" id="SSF51351">
    <property type="entry name" value="Triosephosphate isomerase (TIM)"/>
    <property type="match status" value="1"/>
</dbReference>
<dbReference type="PROSITE" id="PS00171">
    <property type="entry name" value="TIM_1"/>
    <property type="match status" value="1"/>
</dbReference>
<dbReference type="PROSITE" id="PS51440">
    <property type="entry name" value="TIM_2"/>
    <property type="match status" value="1"/>
</dbReference>
<evidence type="ECO:0000250" key="1">
    <source>
        <dbReference type="UniProtKB" id="P9WG43"/>
    </source>
</evidence>
<evidence type="ECO:0000269" key="2">
    <source>
    </source>
</evidence>
<evidence type="ECO:0000269" key="3">
    <source>
    </source>
</evidence>
<evidence type="ECO:0000303" key="4">
    <source>
    </source>
</evidence>
<evidence type="ECO:0000305" key="5"/>
<evidence type="ECO:0000305" key="6">
    <source>
    </source>
</evidence>
<evidence type="ECO:0000312" key="7">
    <source>
        <dbReference type="EMBL" id="ABK75255.1"/>
    </source>
</evidence>
<evidence type="ECO:0000312" key="8">
    <source>
        <dbReference type="EMBL" id="AFP43029.1"/>
    </source>
</evidence>
<gene>
    <name evidence="4" type="primary">lerI</name>
    <name evidence="7" type="synonym">tpiA</name>
    <name evidence="7" type="ordered locus">MSMEG_6785</name>
    <name evidence="8" type="ordered locus">MSMEI_6603</name>
</gene>
<sequence>MPDARALGAAQLWIGTSWKMNKGLAESRGYARELAEYVAAKPPAGVQPFIIPSFTALTTVRDALGDDSPVLLGVQNAHWEDHGAWTGEVSVAQAKDAGAQIVEIGHSERREHFGETVETTRLKVAAALHHGLVPLLCIGESAENKQAGESSRFILEQAAGALEGLTDEHLARVLIAYEPIWAIGENGRPATVEELRQPFDDLAREYGCRTMGLLYGGSVNTDNAEDLLGIDHVTGLFIGRAAWQLPGYVRILEMAAAHPKAKA</sequence>
<name>LERI_MYCS2</name>
<organism>
    <name type="scientific">Mycolicibacterium smegmatis (strain ATCC 700084 / mc(2)155)</name>
    <name type="common">Mycobacterium smegmatis</name>
    <dbReference type="NCBI Taxonomy" id="246196"/>
    <lineage>
        <taxon>Bacteria</taxon>
        <taxon>Bacillati</taxon>
        <taxon>Actinomycetota</taxon>
        <taxon>Actinomycetes</taxon>
        <taxon>Mycobacteriales</taxon>
        <taxon>Mycobacteriaceae</taxon>
        <taxon>Mycolicibacterium</taxon>
    </lineage>
</organism>
<reference key="1">
    <citation type="submission" date="2006-10" db="EMBL/GenBank/DDBJ databases">
        <authorList>
            <person name="Fleischmann R.D."/>
            <person name="Dodson R.J."/>
            <person name="Haft D.H."/>
            <person name="Merkel J.S."/>
            <person name="Nelson W.C."/>
            <person name="Fraser C.M."/>
        </authorList>
    </citation>
    <scope>NUCLEOTIDE SEQUENCE [LARGE SCALE GENOMIC DNA]</scope>
    <source>
        <strain>ATCC 700084 / mc(2)155</strain>
    </source>
</reference>
<reference key="2">
    <citation type="journal article" date="2007" name="Genome Biol.">
        <title>Interrupted coding sequences in Mycobacterium smegmatis: authentic mutations or sequencing errors?</title>
        <authorList>
            <person name="Deshayes C."/>
            <person name="Perrodou E."/>
            <person name="Gallien S."/>
            <person name="Euphrasie D."/>
            <person name="Schaeffer C."/>
            <person name="Van-Dorsselaer A."/>
            <person name="Poch O."/>
            <person name="Lecompte O."/>
            <person name="Reyrat J.-M."/>
        </authorList>
    </citation>
    <scope>NUCLEOTIDE SEQUENCE [LARGE SCALE GENOMIC DNA]</scope>
    <source>
        <strain>ATCC 700084 / mc(2)155</strain>
    </source>
</reference>
<reference key="3">
    <citation type="journal article" date="2009" name="Genome Res.">
        <title>Ortho-proteogenomics: multiple proteomes investigation through orthology and a new MS-based protocol.</title>
        <authorList>
            <person name="Gallien S."/>
            <person name="Perrodou E."/>
            <person name="Carapito C."/>
            <person name="Deshayes C."/>
            <person name="Reyrat J.-M."/>
            <person name="Van Dorsselaer A."/>
            <person name="Poch O."/>
            <person name="Schaeffer C."/>
            <person name="Lecompte O."/>
        </authorList>
    </citation>
    <scope>NUCLEOTIDE SEQUENCE [LARGE SCALE GENOMIC DNA]</scope>
    <source>
        <strain>ATCC 700084 / mc(2)155</strain>
    </source>
</reference>
<reference key="4">
    <citation type="journal article" date="2015" name="J. Am. Chem. Soc.">
        <title>A general strategy for the discovery of metabolic pathways: D-threitol, L-threitol, and erythritol utilization in Mycobacterium smegmatis.</title>
        <authorList>
            <person name="Huang H."/>
            <person name="Carter M.S."/>
            <person name="Vetting M.W."/>
            <person name="Al-Obaidi N."/>
            <person name="Patskovsky Y."/>
            <person name="Almo S.C."/>
            <person name="Gerlt J.A."/>
        </authorList>
    </citation>
    <scope>FUNCTION</scope>
    <scope>CATALYTIC ACTIVITY</scope>
    <scope>DISRUPTION PHENOTYPE</scope>
    <scope>PATHWAY</scope>
    <source>
        <strain>ATCC 700084 / mc(2)155</strain>
    </source>
</reference>
<reference key="5">
    <citation type="journal article" date="2016" name="J. Am. Chem. Soc.">
        <title>Correction to 'A general strategy for the discovery of metabolic pathways: D-threitol, L-threitol, and erythritol utilization in Mycobacterium smegmatis'.</title>
        <authorList>
            <person name="Huang H."/>
            <person name="Carter M.S."/>
            <person name="Vetting M.W."/>
            <person name="Al-Obaidi N."/>
            <person name="Patskovsky Y."/>
            <person name="Almo S.C."/>
            <person name="Gerlt J.A."/>
        </authorList>
    </citation>
    <scope>ERRATUM OF PUBMED:26560079</scope>
    <scope>CORRECTION TO SUBSTRATE IDENTIFICATION</scope>
</reference>
<comment type="function">
    <text evidence="2 6">Catalyzes the isomerization of L-erythrulose-1P to D-erythrulose-4P. Involved in the degradation pathway of L-threitol, that allows M.smegmatis to grow on this compound as the sole carbon source.</text>
</comment>
<comment type="catalytic activity">
    <reaction evidence="2 6">
        <text>L-erythrulose 1-phosphate = D-erythrulose 4-phosphate</text>
        <dbReference type="Rhea" id="RHEA:49588"/>
        <dbReference type="ChEBI" id="CHEBI:58002"/>
        <dbReference type="ChEBI" id="CHEBI:90796"/>
        <dbReference type="EC" id="5.3.1.33"/>
    </reaction>
</comment>
<comment type="pathway">
    <text evidence="2">Carbohydrate metabolism; L-threitol degradation.</text>
</comment>
<comment type="disruption phenotype">
    <text evidence="2">Cells lacking this gene are totally unable to grow on L-threitol.</text>
</comment>
<comment type="similarity">
    <text evidence="5">Belongs to the triosephosphate isomerase family.</text>
</comment>
<comment type="caution">
    <text evidence="2 3">The substrate of the reaction was originally identified as L-erythrulose 4-phosphate (PubMed:26560079). It was then corrected to L-erythrulose 1-phosphate by the same group (PubMed:26978037).</text>
</comment>
<comment type="sequence caution" evidence="5">
    <conflict type="erroneous initiation">
        <sequence resource="EMBL-CDS" id="AFP43029"/>
    </conflict>
    <text>Extended N-terminus.</text>
</comment>
<protein>
    <recommendedName>
        <fullName evidence="6">L-erythrulose-1-phosphate isomerase</fullName>
        <ecNumber evidence="2 6">5.3.1.33</ecNumber>
    </recommendedName>
</protein>
<keyword id="KW-0119">Carbohydrate metabolism</keyword>
<keyword id="KW-0413">Isomerase</keyword>
<keyword id="KW-1185">Reference proteome</keyword>
<accession>A0R756</accession>
<accession>I7GGP3</accession>